<name>IL21_HUMAN</name>
<accession>Q9HBE4</accession>
<accession>A5J0L4</accession>
<protein>
    <recommendedName>
        <fullName evidence="11">Interleukin-21</fullName>
        <shortName>IL-21</shortName>
    </recommendedName>
    <alternativeName>
        <fullName>Za11</fullName>
    </alternativeName>
</protein>
<gene>
    <name evidence="12" type="primary">IL21</name>
</gene>
<sequence>MRSSPGNMERIVICLMVIFLGTLVHKSSSQGQDRHMIRMRQLIDIVDQLKNYVNDLVPEFLPAPEDVETNCEWSAFSCFQKAQLKSANTGNNERIINVSIKKLKRKPPSTNAGRRQKHRLTCPSCDSYEKKPPKEFLERFKSLLQKMIHQHLSSRTHGSEDS</sequence>
<reference key="1">
    <citation type="journal article" date="2000" name="Nature">
        <title>Interleukin 21 and its receptor are involved in NK cell expansion and regulation of lymphocyte function.</title>
        <authorList>
            <person name="Parrish-Novak J."/>
            <person name="Dillon S.R."/>
            <person name="Nelson A."/>
            <person name="Hammond A."/>
            <person name="Sprecher C."/>
            <person name="Gross J.A."/>
            <person name="Johnston J."/>
            <person name="Madden K."/>
            <person name="Xu W."/>
            <person name="West J."/>
            <person name="Schrader S."/>
            <person name="Burkhead S."/>
            <person name="Heipel M."/>
            <person name="Brandt C."/>
            <person name="Kuijper J.L."/>
            <person name="Kramer J."/>
            <person name="Conklin D."/>
            <person name="Presnell S.R."/>
            <person name="Berry J."/>
            <person name="Shiota F."/>
            <person name="Bort S."/>
            <person name="Hambly K."/>
            <person name="Mudri S."/>
            <person name="Clegg C."/>
            <person name="Moore M."/>
            <person name="Grant F.J."/>
            <person name="Lofton-Day C."/>
            <person name="Gilbert T."/>
            <person name="Raymond F."/>
            <person name="Ching A."/>
            <person name="Yao L."/>
            <person name="Smith D."/>
            <person name="Webster P."/>
            <person name="Whitmore T."/>
            <person name="Maurer M."/>
            <person name="Kaushansky K."/>
            <person name="Holly R.D."/>
            <person name="Foster D."/>
        </authorList>
    </citation>
    <scope>NUCLEOTIDE SEQUENCE [MRNA] (ISOFORM 1)</scope>
    <scope>FUNCTION</scope>
    <scope>SUBCELLULAR LOCATION</scope>
    <scope>TISSUE SPECIFICITY</scope>
</reference>
<reference key="2">
    <citation type="journal article" date="2007" name="FEBS Lett.">
        <title>Cloning and characterization of an isoform of interleukin-21.</title>
        <authorList>
            <person name="Rahman M."/>
            <person name="Nara H."/>
            <person name="Onoda T."/>
            <person name="Araki A."/>
            <person name="Li J."/>
            <person name="Hoshino T."/>
            <person name="Asao H."/>
        </authorList>
    </citation>
    <scope>NUCLEOTIDE SEQUENCE [MRNA] (ISOFORM 2)</scope>
</reference>
<reference key="3">
    <citation type="submission" date="2004-09" db="EMBL/GenBank/DDBJ databases">
        <authorList>
            <consortium name="SeattleSNPs variation discovery resource"/>
        </authorList>
    </citation>
    <scope>NUCLEOTIDE SEQUENCE [GENOMIC DNA]</scope>
</reference>
<reference key="4">
    <citation type="journal article" date="2005" name="Nature">
        <title>Generation and annotation of the DNA sequences of human chromosomes 2 and 4.</title>
        <authorList>
            <person name="Hillier L.W."/>
            <person name="Graves T.A."/>
            <person name="Fulton R.S."/>
            <person name="Fulton L.A."/>
            <person name="Pepin K.H."/>
            <person name="Minx P."/>
            <person name="Wagner-McPherson C."/>
            <person name="Layman D."/>
            <person name="Wylie K."/>
            <person name="Sekhon M."/>
            <person name="Becker M.C."/>
            <person name="Fewell G.A."/>
            <person name="Delehaunty K.D."/>
            <person name="Miner T.L."/>
            <person name="Nash W.E."/>
            <person name="Kremitzki C."/>
            <person name="Oddy L."/>
            <person name="Du H."/>
            <person name="Sun H."/>
            <person name="Bradshaw-Cordum H."/>
            <person name="Ali J."/>
            <person name="Carter J."/>
            <person name="Cordes M."/>
            <person name="Harris A."/>
            <person name="Isak A."/>
            <person name="van Brunt A."/>
            <person name="Nguyen C."/>
            <person name="Du F."/>
            <person name="Courtney L."/>
            <person name="Kalicki J."/>
            <person name="Ozersky P."/>
            <person name="Abbott S."/>
            <person name="Armstrong J."/>
            <person name="Belter E.A."/>
            <person name="Caruso L."/>
            <person name="Cedroni M."/>
            <person name="Cotton M."/>
            <person name="Davidson T."/>
            <person name="Desai A."/>
            <person name="Elliott G."/>
            <person name="Erb T."/>
            <person name="Fronick C."/>
            <person name="Gaige T."/>
            <person name="Haakenson W."/>
            <person name="Haglund K."/>
            <person name="Holmes A."/>
            <person name="Harkins R."/>
            <person name="Kim K."/>
            <person name="Kruchowski S.S."/>
            <person name="Strong C.M."/>
            <person name="Grewal N."/>
            <person name="Goyea E."/>
            <person name="Hou S."/>
            <person name="Levy A."/>
            <person name="Martinka S."/>
            <person name="Mead K."/>
            <person name="McLellan M.D."/>
            <person name="Meyer R."/>
            <person name="Randall-Maher J."/>
            <person name="Tomlinson C."/>
            <person name="Dauphin-Kohlberg S."/>
            <person name="Kozlowicz-Reilly A."/>
            <person name="Shah N."/>
            <person name="Swearengen-Shahid S."/>
            <person name="Snider J."/>
            <person name="Strong J.T."/>
            <person name="Thompson J."/>
            <person name="Yoakum M."/>
            <person name="Leonard S."/>
            <person name="Pearman C."/>
            <person name="Trani L."/>
            <person name="Radionenko M."/>
            <person name="Waligorski J.E."/>
            <person name="Wang C."/>
            <person name="Rock S.M."/>
            <person name="Tin-Wollam A.-M."/>
            <person name="Maupin R."/>
            <person name="Latreille P."/>
            <person name="Wendl M.C."/>
            <person name="Yang S.-P."/>
            <person name="Pohl C."/>
            <person name="Wallis J.W."/>
            <person name="Spieth J."/>
            <person name="Bieri T.A."/>
            <person name="Berkowicz N."/>
            <person name="Nelson J.O."/>
            <person name="Osborne J."/>
            <person name="Ding L."/>
            <person name="Meyer R."/>
            <person name="Sabo A."/>
            <person name="Shotland Y."/>
            <person name="Sinha P."/>
            <person name="Wohldmann P.E."/>
            <person name="Cook L.L."/>
            <person name="Hickenbotham M.T."/>
            <person name="Eldred J."/>
            <person name="Williams D."/>
            <person name="Jones T.A."/>
            <person name="She X."/>
            <person name="Ciccarelli F.D."/>
            <person name="Izaurralde E."/>
            <person name="Taylor J."/>
            <person name="Schmutz J."/>
            <person name="Myers R.M."/>
            <person name="Cox D.R."/>
            <person name="Huang X."/>
            <person name="McPherson J.D."/>
            <person name="Mardis E.R."/>
            <person name="Clifton S.W."/>
            <person name="Warren W.C."/>
            <person name="Chinwalla A.T."/>
            <person name="Eddy S.R."/>
            <person name="Marra M.A."/>
            <person name="Ovcharenko I."/>
            <person name="Furey T.S."/>
            <person name="Miller W."/>
            <person name="Eichler E.E."/>
            <person name="Bork P."/>
            <person name="Suyama M."/>
            <person name="Torrents D."/>
            <person name="Waterston R.H."/>
            <person name="Wilson R.K."/>
        </authorList>
    </citation>
    <scope>NUCLEOTIDE SEQUENCE [LARGE SCALE GENOMIC DNA]</scope>
</reference>
<reference key="5">
    <citation type="journal article" date="2004" name="Genome Res.">
        <title>The status, quality, and expansion of the NIH full-length cDNA project: the Mammalian Gene Collection (MGC).</title>
        <authorList>
            <consortium name="The MGC Project Team"/>
        </authorList>
    </citation>
    <scope>NUCLEOTIDE SEQUENCE [LARGE SCALE MRNA] (ISOFORM 1)</scope>
</reference>
<reference key="6">
    <citation type="journal article" date="2004" name="J. Leukoc. Biol.">
        <title>IFN-alpha regulates IL-21 and IL-21R expression in human NK and T cells.</title>
        <authorList>
            <person name="Strengell M."/>
            <person name="Julkunen I."/>
            <person name="Matikainen S."/>
        </authorList>
    </citation>
    <scope>FUNCTION</scope>
</reference>
<reference key="7">
    <citation type="journal article" date="2004" name="Immunology">
        <title>Interleukin-21 is a T-helper cytokine that regulates humoral immunity and cell-mediated anti-tumour responses.</title>
        <authorList>
            <person name="Sivakumar P.V."/>
            <person name="Foster D.C."/>
            <person name="Clegg C.H."/>
        </authorList>
    </citation>
    <scope>REVIEW</scope>
</reference>
<reference key="8">
    <citation type="journal article" date="2007" name="J. Biol. Chem.">
        <title>The existence of multiple conformers of interleukin-21 directs engineering of a superpotent analogue.</title>
        <authorList>
            <person name="Bondensgaard K."/>
            <person name="Breinholt J."/>
            <person name="Madsen D."/>
            <person name="Omkvist D.H."/>
            <person name="Kang L."/>
            <person name="Worsaae A."/>
            <person name="Becker P."/>
            <person name="Schioedt C.B."/>
            <person name="Hjorth S.A."/>
        </authorList>
    </citation>
    <scope>STRUCTURE BY NMR OF 30-162</scope>
    <scope>DISULFIDE BONDS</scope>
</reference>
<reference key="9">
    <citation type="journal article" date="2012" name="J. Biol. Chem.">
        <title>Crystal structure of interleukin-21 receptor (IL-21R) bound to IL-21 reveals that sugar chain interacting with WSXWS motif is integral part of IL-21R.</title>
        <authorList>
            <person name="Hamming O.J."/>
            <person name="Kang L."/>
            <person name="Svensson A."/>
            <person name="Karlsen J.L."/>
            <person name="Rahbek-Nielsen H."/>
            <person name="Paludan S.R."/>
            <person name="Hjorth S.A."/>
            <person name="Bondensgaard K."/>
            <person name="Hartmann R."/>
        </authorList>
    </citation>
    <scope>X-RAY CRYSTALLOGRAPHY (2.8 ANGSTROMS) OF 30-162 IN COMPLEX WITH IL21R</scope>
    <scope>DISULFIDE BONDS</scope>
</reference>
<reference key="10">
    <citation type="journal article" date="2014" name="J. Allergy Clin. Immunol.">
        <title>Early-onset inflammatory bowel disease and common variable immunodeficiency-like disease caused by IL-21 deficiency.</title>
        <authorList>
            <person name="Salzer E."/>
            <person name="Kansu A."/>
            <person name="Sic H."/>
            <person name="Majek P."/>
            <person name="Ikinciogullari A."/>
            <person name="Dogu F.E."/>
            <person name="Prengemann N.K."/>
            <person name="Santos-Valente E."/>
            <person name="Pickl W.F."/>
            <person name="Bilic I."/>
            <person name="Ban S.A."/>
            <person name="Kuloglu Z."/>
            <person name="Demir A.M."/>
            <person name="Ensari A."/>
            <person name="Colinge J."/>
            <person name="Rizzi M."/>
            <person name="Eibel H."/>
            <person name="Boztug K."/>
        </authorList>
    </citation>
    <scope>VARIANT CVID11 PRO-56</scope>
    <scope>CHARACTERIZATION OF VARIANT CVID11 PRO-56</scope>
</reference>
<keyword id="KW-0002">3D-structure</keyword>
<keyword id="KW-0025">Alternative splicing</keyword>
<keyword id="KW-0202">Cytokine</keyword>
<keyword id="KW-0225">Disease variant</keyword>
<keyword id="KW-1015">Disulfide bond</keyword>
<keyword id="KW-0325">Glycoprotein</keyword>
<keyword id="KW-1267">Proteomics identification</keyword>
<keyword id="KW-1185">Reference proteome</keyword>
<keyword id="KW-0964">Secreted</keyword>
<keyword id="KW-0732">Signal</keyword>
<comment type="function">
    <text evidence="2 5 6">Cytokine with immunoregulatory activity. May promote the transition between innate and adaptive immunity. Induces the production of IgG(1) and IgG(3) in B-cells (By similarity). Implicated in the generation and maintenance of T follicular helper (Tfh) cells and the formation of germinal-centers. Together with IL6, control the early generation of Tfh cells and are critical for an effective antibody response to acute viral infection (By similarity). May play a role in proliferation and maturation of natural killer (NK) cells in synergy with IL15. May regulate proliferation of mature B- and T-cells in response to activating stimuli. In synergy with IL15 and IL18 stimulates interferon gamma production in T-cells and NK cells (PubMed:11081504, PubMed:15178704). During T-cell mediated immune response may inhibit dendritic cells (DC) activation and maturation (By similarity).</text>
</comment>
<comment type="interaction">
    <interactant intactId="EBI-6595560">
        <id>Q9HBE4</id>
    </interactant>
    <interactant intactId="EBI-12092171">
        <id>Q12797-6</id>
        <label>ASPH</label>
    </interactant>
    <organismsDiffer>false</organismsDiffer>
    <experiments>3</experiments>
</comment>
<comment type="subcellular location">
    <subcellularLocation>
        <location evidence="5">Secreted</location>
    </subcellularLocation>
</comment>
<comment type="alternative products">
    <event type="alternative splicing"/>
    <isoform>
        <id>Q9HBE4-1</id>
        <name>1</name>
        <sequence type="displayed"/>
    </isoform>
    <isoform>
        <id>Q9HBE4-2</id>
        <name>2</name>
        <name>IL-21iso</name>
        <sequence type="described" ref="VSP_030129"/>
    </isoform>
</comment>
<comment type="tissue specificity">
    <text evidence="5">Expressed in activated CD4-positive T-cells but not in CD8-positive T-cells, B-cells, or monocytes.</text>
</comment>
<comment type="disease" evidence="9">
    <disease id="DI-04080">
        <name>Immunodeficiency, common variable, 11</name>
        <acronym>CVID11</acronym>
        <description>A primary immunodeficiency characterized by antibody deficiency, hypogammaglobulinemia, recurrent bacterial infections and an inability to mount an antibody response to antigen. The defect results from a failure of B-cell differentiation and impaired secretion of immunoglobulins; the numbers of circulating B-cells is usually in the normal range, but can be low.</description>
        <dbReference type="MIM" id="615767"/>
    </disease>
    <text>The disease is caused by variants affecting the gene represented in this entry.</text>
</comment>
<comment type="similarity">
    <text evidence="11">Belongs to the IL-15/IL-21 family.</text>
</comment>
<comment type="caution">
    <text evidence="11">It is uncertain whether Met-1 or Met-8 is the initiator.</text>
</comment>
<organism>
    <name type="scientific">Homo sapiens</name>
    <name type="common">Human</name>
    <dbReference type="NCBI Taxonomy" id="9606"/>
    <lineage>
        <taxon>Eukaryota</taxon>
        <taxon>Metazoa</taxon>
        <taxon>Chordata</taxon>
        <taxon>Craniata</taxon>
        <taxon>Vertebrata</taxon>
        <taxon>Euteleostomi</taxon>
        <taxon>Mammalia</taxon>
        <taxon>Eutheria</taxon>
        <taxon>Euarchontoglires</taxon>
        <taxon>Primates</taxon>
        <taxon>Haplorrhini</taxon>
        <taxon>Catarrhini</taxon>
        <taxon>Hominidae</taxon>
        <taxon>Homo</taxon>
    </lineage>
</organism>
<evidence type="ECO:0000250" key="1">
    <source>
        <dbReference type="UniProtKB" id="Q76LU5"/>
    </source>
</evidence>
<evidence type="ECO:0000250" key="2">
    <source>
        <dbReference type="UniProtKB" id="Q9ES17"/>
    </source>
</evidence>
<evidence type="ECO:0000255" key="3"/>
<evidence type="ECO:0000256" key="4">
    <source>
        <dbReference type="SAM" id="MobiDB-lite"/>
    </source>
</evidence>
<evidence type="ECO:0000269" key="5">
    <source>
    </source>
</evidence>
<evidence type="ECO:0000269" key="6">
    <source>
    </source>
</evidence>
<evidence type="ECO:0000269" key="7">
    <source>
    </source>
</evidence>
<evidence type="ECO:0000269" key="8">
    <source>
    </source>
</evidence>
<evidence type="ECO:0000269" key="9">
    <source>
    </source>
</evidence>
<evidence type="ECO:0000303" key="10">
    <source>
    </source>
</evidence>
<evidence type="ECO:0000305" key="11"/>
<evidence type="ECO:0000312" key="12">
    <source>
        <dbReference type="HGNC" id="HGNC:6005"/>
    </source>
</evidence>
<evidence type="ECO:0000312" key="13">
    <source>
        <dbReference type="PDB" id="2OQP"/>
    </source>
</evidence>
<evidence type="ECO:0000312" key="14">
    <source>
        <dbReference type="PDB" id="3TGX"/>
    </source>
</evidence>
<evidence type="ECO:0007829" key="15">
    <source>
        <dbReference type="PDB" id="2OQP"/>
    </source>
</evidence>
<evidence type="ECO:0007829" key="16">
    <source>
        <dbReference type="PDB" id="3TGX"/>
    </source>
</evidence>
<evidence type="ECO:0007829" key="17">
    <source>
        <dbReference type="PDB" id="8ENT"/>
    </source>
</evidence>
<dbReference type="EMBL" id="AF254069">
    <property type="protein sequence ID" value="AAG29348.1"/>
    <property type="molecule type" value="mRNA"/>
</dbReference>
<dbReference type="EMBL" id="DQ645417">
    <property type="protein sequence ID" value="ABG36529.1"/>
    <property type="molecule type" value="mRNA"/>
</dbReference>
<dbReference type="EMBL" id="AY763518">
    <property type="protein sequence ID" value="AAU88182.1"/>
    <property type="molecule type" value="Genomic_DNA"/>
</dbReference>
<dbReference type="EMBL" id="AC053545">
    <property type="status" value="NOT_ANNOTATED_CDS"/>
    <property type="molecule type" value="Genomic_DNA"/>
</dbReference>
<dbReference type="EMBL" id="BC066258">
    <property type="protein sequence ID" value="AAH66258.1"/>
    <property type="molecule type" value="mRNA"/>
</dbReference>
<dbReference type="EMBL" id="BC066259">
    <property type="protein sequence ID" value="AAH66259.1"/>
    <property type="molecule type" value="mRNA"/>
</dbReference>
<dbReference type="EMBL" id="BC066260">
    <property type="protein sequence ID" value="AAH66260.1"/>
    <property type="molecule type" value="mRNA"/>
</dbReference>
<dbReference type="EMBL" id="BC066261">
    <property type="protein sequence ID" value="AAH66261.1"/>
    <property type="molecule type" value="mRNA"/>
</dbReference>
<dbReference type="EMBL" id="BC066262">
    <property type="protein sequence ID" value="AAH66262.1"/>
    <property type="molecule type" value="mRNA"/>
</dbReference>
<dbReference type="EMBL" id="BC069124">
    <property type="protein sequence ID" value="AAH69124.1"/>
    <property type="molecule type" value="mRNA"/>
</dbReference>
<dbReference type="CCDS" id="CCDS3727.1">
    <molecule id="Q9HBE4-1"/>
</dbReference>
<dbReference type="CCDS" id="CCDS75189.1">
    <molecule id="Q9HBE4-2"/>
</dbReference>
<dbReference type="RefSeq" id="NP_001193935.1">
    <molecule id="Q9HBE4-2"/>
    <property type="nucleotide sequence ID" value="NM_001207006.3"/>
</dbReference>
<dbReference type="RefSeq" id="NP_068575.1">
    <molecule id="Q9HBE4-1"/>
    <property type="nucleotide sequence ID" value="NM_021803.4"/>
</dbReference>
<dbReference type="PDB" id="2OQP">
    <property type="method" value="NMR"/>
    <property type="chains" value="A=30-162"/>
</dbReference>
<dbReference type="PDB" id="3TGX">
    <property type="method" value="X-ray"/>
    <property type="resolution" value="2.80 A"/>
    <property type="chains" value="B/D/F/H/J/L/N/P=30-162"/>
</dbReference>
<dbReference type="PDB" id="8ENT">
    <property type="method" value="X-ray"/>
    <property type="resolution" value="2.83 A"/>
    <property type="chains" value="A/D/G/J=30-162"/>
</dbReference>
<dbReference type="PDBsum" id="2OQP"/>
<dbReference type="PDBsum" id="3TGX"/>
<dbReference type="PDBsum" id="8ENT"/>
<dbReference type="EMDB" id="EMD-28278"/>
<dbReference type="SMR" id="Q9HBE4"/>
<dbReference type="BioGRID" id="121857">
    <property type="interactions" value="10"/>
</dbReference>
<dbReference type="ComplexPortal" id="CPX-833">
    <property type="entry name" value="Interleukin-21 receptor-ligand complex"/>
</dbReference>
<dbReference type="CORUM" id="Q9HBE4"/>
<dbReference type="FunCoup" id="Q9HBE4">
    <property type="interactions" value="421"/>
</dbReference>
<dbReference type="IntAct" id="Q9HBE4">
    <property type="interactions" value="4"/>
</dbReference>
<dbReference type="MINT" id="Q9HBE4"/>
<dbReference type="STRING" id="9606.ENSP00000497915"/>
<dbReference type="BindingDB" id="Q9HBE4"/>
<dbReference type="ChEMBL" id="CHEMBL4665586"/>
<dbReference type="GlyCosmos" id="Q9HBE4">
    <property type="glycosylation" value="1 site, No reported glycans"/>
</dbReference>
<dbReference type="GlyGen" id="Q9HBE4">
    <property type="glycosylation" value="1 site"/>
</dbReference>
<dbReference type="iPTMnet" id="Q9HBE4"/>
<dbReference type="PhosphoSitePlus" id="Q9HBE4"/>
<dbReference type="BioMuta" id="IL21"/>
<dbReference type="DMDM" id="55976599"/>
<dbReference type="MassIVE" id="Q9HBE4"/>
<dbReference type="PaxDb" id="9606-ENSP00000264497"/>
<dbReference type="PeptideAtlas" id="Q9HBE4"/>
<dbReference type="ProteomicsDB" id="81533">
    <molecule id="Q9HBE4-1"/>
</dbReference>
<dbReference type="ProteomicsDB" id="81534">
    <molecule id="Q9HBE4-2"/>
</dbReference>
<dbReference type="ABCD" id="Q9HBE4">
    <property type="antibodies" value="19 sequenced antibodies"/>
</dbReference>
<dbReference type="Antibodypedia" id="15937">
    <property type="antibodies" value="925 antibodies from 47 providers"/>
</dbReference>
<dbReference type="DNASU" id="59067"/>
<dbReference type="Ensembl" id="ENST00000611104.2">
    <molecule id="Q9HBE4-2"/>
    <property type="protein sequence ID" value="ENSP00000477555.1"/>
    <property type="gene ID" value="ENSG00000138684.9"/>
</dbReference>
<dbReference type="Ensembl" id="ENST00000648588.1">
    <molecule id="Q9HBE4-1"/>
    <property type="protein sequence ID" value="ENSP00000497915.1"/>
    <property type="gene ID" value="ENSG00000138684.9"/>
</dbReference>
<dbReference type="GeneID" id="59067"/>
<dbReference type="KEGG" id="hsa:59067"/>
<dbReference type="MANE-Select" id="ENST00000648588.1">
    <property type="protein sequence ID" value="ENSP00000497915.1"/>
    <property type="RefSeq nucleotide sequence ID" value="NM_021803.4"/>
    <property type="RefSeq protein sequence ID" value="NP_068575.1"/>
</dbReference>
<dbReference type="UCSC" id="uc003ies.4">
    <molecule id="Q9HBE4-1"/>
    <property type="organism name" value="human"/>
</dbReference>
<dbReference type="AGR" id="HGNC:6005"/>
<dbReference type="CTD" id="59067"/>
<dbReference type="DisGeNET" id="59067"/>
<dbReference type="GeneCards" id="IL21"/>
<dbReference type="HGNC" id="HGNC:6005">
    <property type="gene designation" value="IL21"/>
</dbReference>
<dbReference type="HPA" id="ENSG00000138684">
    <property type="expression patterns" value="Tissue enriched (lymphoid)"/>
</dbReference>
<dbReference type="MalaCards" id="IL21"/>
<dbReference type="MIM" id="605384">
    <property type="type" value="gene"/>
</dbReference>
<dbReference type="MIM" id="615767">
    <property type="type" value="phenotype"/>
</dbReference>
<dbReference type="neXtProt" id="NX_Q9HBE4"/>
<dbReference type="OpenTargets" id="ENSG00000138684"/>
<dbReference type="Orphanet" id="477661">
    <property type="disease" value="IL21-related infantile inflammatory bowel disease"/>
</dbReference>
<dbReference type="PharmGKB" id="PA29820"/>
<dbReference type="VEuPathDB" id="HostDB:ENSG00000138684"/>
<dbReference type="eggNOG" id="ENOG502SES1">
    <property type="taxonomic scope" value="Eukaryota"/>
</dbReference>
<dbReference type="GeneTree" id="ENSGT00390000010494"/>
<dbReference type="HOGENOM" id="CLU_127182_1_0_1"/>
<dbReference type="InParanoid" id="Q9HBE4"/>
<dbReference type="OMA" id="MIHQHLR"/>
<dbReference type="OrthoDB" id="9426569at2759"/>
<dbReference type="PAN-GO" id="Q9HBE4">
    <property type="GO annotations" value="1 GO annotation based on evolutionary models"/>
</dbReference>
<dbReference type="PhylomeDB" id="Q9HBE4"/>
<dbReference type="TreeFam" id="TF336380"/>
<dbReference type="PathwayCommons" id="Q9HBE4"/>
<dbReference type="Reactome" id="R-HSA-9020958">
    <property type="pathway name" value="Interleukin-21 signaling"/>
</dbReference>
<dbReference type="SignaLink" id="Q9HBE4"/>
<dbReference type="SIGNOR" id="Q9HBE4"/>
<dbReference type="BioGRID-ORCS" id="59067">
    <property type="hits" value="13 hits in 1135 CRISPR screens"/>
</dbReference>
<dbReference type="EvolutionaryTrace" id="Q9HBE4"/>
<dbReference type="GeneWiki" id="Interleukin_21"/>
<dbReference type="GenomeRNAi" id="59067"/>
<dbReference type="Pharos" id="Q9HBE4">
    <property type="development level" value="Tbio"/>
</dbReference>
<dbReference type="PRO" id="PR:Q9HBE4"/>
<dbReference type="Proteomes" id="UP000005640">
    <property type="component" value="Chromosome 4"/>
</dbReference>
<dbReference type="RNAct" id="Q9HBE4">
    <property type="molecule type" value="protein"/>
</dbReference>
<dbReference type="Bgee" id="ENSG00000138684">
    <property type="expression patterns" value="Expressed in male germ line stem cell (sensu Vertebrata) in testis and 19 other cell types or tissues"/>
</dbReference>
<dbReference type="ExpressionAtlas" id="Q9HBE4">
    <property type="expression patterns" value="baseline and differential"/>
</dbReference>
<dbReference type="GO" id="GO:0005576">
    <property type="term" value="C:extracellular region"/>
    <property type="evidence" value="ECO:0000304"/>
    <property type="project" value="Reactome"/>
</dbReference>
<dbReference type="GO" id="GO:0005615">
    <property type="term" value="C:extracellular space"/>
    <property type="evidence" value="ECO:0000303"/>
    <property type="project" value="UniProtKB"/>
</dbReference>
<dbReference type="GO" id="GO:0005125">
    <property type="term" value="F:cytokine activity"/>
    <property type="evidence" value="ECO:0007669"/>
    <property type="project" value="UniProtKB-KW"/>
</dbReference>
<dbReference type="GO" id="GO:0005126">
    <property type="term" value="F:cytokine receptor binding"/>
    <property type="evidence" value="ECO:0000304"/>
    <property type="project" value="UniProtKB"/>
</dbReference>
<dbReference type="GO" id="GO:0005134">
    <property type="term" value="F:interleukin-2 receptor binding"/>
    <property type="evidence" value="ECO:0000353"/>
    <property type="project" value="UniProtKB"/>
</dbReference>
<dbReference type="GO" id="GO:0048469">
    <property type="term" value="P:cell maturation"/>
    <property type="evidence" value="ECO:0000314"/>
    <property type="project" value="UniProtKB"/>
</dbReference>
<dbReference type="GO" id="GO:0098586">
    <property type="term" value="P:cellular response to virus"/>
    <property type="evidence" value="ECO:0000250"/>
    <property type="project" value="UniProtKB"/>
</dbReference>
<dbReference type="GO" id="GO:0051607">
    <property type="term" value="P:defense response to virus"/>
    <property type="evidence" value="ECO:0000304"/>
    <property type="project" value="ARUK-UCL"/>
</dbReference>
<dbReference type="GO" id="GO:0002314">
    <property type="term" value="P:germinal center B cell differentiation"/>
    <property type="evidence" value="ECO:0000250"/>
    <property type="project" value="UniProtKB"/>
</dbReference>
<dbReference type="GO" id="GO:0001779">
    <property type="term" value="P:natural killer cell differentiation"/>
    <property type="evidence" value="ECO:0007669"/>
    <property type="project" value="Ensembl"/>
</dbReference>
<dbReference type="GO" id="GO:0042267">
    <property type="term" value="P:natural killer cell mediated cytotoxicity"/>
    <property type="evidence" value="ECO:0007669"/>
    <property type="project" value="Ensembl"/>
</dbReference>
<dbReference type="GO" id="GO:0030890">
    <property type="term" value="P:positive regulation of B cell proliferation"/>
    <property type="evidence" value="ECO:0000314"/>
    <property type="project" value="MGI"/>
</dbReference>
<dbReference type="GO" id="GO:0008284">
    <property type="term" value="P:positive regulation of cell population proliferation"/>
    <property type="evidence" value="ECO:0000314"/>
    <property type="project" value="MGI"/>
</dbReference>
<dbReference type="GO" id="GO:0001819">
    <property type="term" value="P:positive regulation of cytokine production"/>
    <property type="evidence" value="ECO:0000314"/>
    <property type="project" value="CACAO"/>
</dbReference>
<dbReference type="GO" id="GO:0002639">
    <property type="term" value="P:positive regulation of immunoglobulin production"/>
    <property type="evidence" value="ECO:0000250"/>
    <property type="project" value="UniProtKB"/>
</dbReference>
<dbReference type="GO" id="GO:0050729">
    <property type="term" value="P:positive regulation of inflammatory response"/>
    <property type="evidence" value="ECO:0000305"/>
    <property type="project" value="BHF-UCL"/>
</dbReference>
<dbReference type="GO" id="GO:0032733">
    <property type="term" value="P:positive regulation of interleukin-10 production"/>
    <property type="evidence" value="ECO:0007669"/>
    <property type="project" value="Ensembl"/>
</dbReference>
<dbReference type="GO" id="GO:0032740">
    <property type="term" value="P:positive regulation of interleukin-17 production"/>
    <property type="evidence" value="ECO:0000314"/>
    <property type="project" value="BHF-UCL"/>
</dbReference>
<dbReference type="GO" id="GO:0002729">
    <property type="term" value="P:positive regulation of natural killer cell cytokine production"/>
    <property type="evidence" value="ECO:0007669"/>
    <property type="project" value="Ensembl"/>
</dbReference>
<dbReference type="GO" id="GO:0032825">
    <property type="term" value="P:positive regulation of natural killer cell differentiation"/>
    <property type="evidence" value="ECO:0007669"/>
    <property type="project" value="Ensembl"/>
</dbReference>
<dbReference type="GO" id="GO:0045954">
    <property type="term" value="P:positive regulation of natural killer cell mediated cytotoxicity"/>
    <property type="evidence" value="ECO:0000314"/>
    <property type="project" value="CACAO"/>
</dbReference>
<dbReference type="GO" id="GO:0042102">
    <property type="term" value="P:positive regulation of T cell proliferation"/>
    <property type="evidence" value="ECO:0000314"/>
    <property type="project" value="UniProtKB"/>
</dbReference>
<dbReference type="GO" id="GO:0034105">
    <property type="term" value="P:positive regulation of tissue remodeling"/>
    <property type="evidence" value="ECO:0000305"/>
    <property type="project" value="BHF-UCL"/>
</dbReference>
<dbReference type="GO" id="GO:0032729">
    <property type="term" value="P:positive regulation of type II interferon production"/>
    <property type="evidence" value="ECO:0000303"/>
    <property type="project" value="UniProtKB"/>
</dbReference>
<dbReference type="GO" id="GO:0042531">
    <property type="term" value="P:positive regulation of tyrosine phosphorylation of STAT protein"/>
    <property type="evidence" value="ECO:0000314"/>
    <property type="project" value="MGI"/>
</dbReference>
<dbReference type="GO" id="GO:0007165">
    <property type="term" value="P:signal transduction"/>
    <property type="evidence" value="ECO:0000303"/>
    <property type="project" value="UniProtKB"/>
</dbReference>
<dbReference type="GO" id="GO:0061470">
    <property type="term" value="P:T follicular helper cell differentiation"/>
    <property type="evidence" value="ECO:0000250"/>
    <property type="project" value="UniProtKB"/>
</dbReference>
<dbReference type="GO" id="GO:0007260">
    <property type="term" value="P:tyrosine phosphorylation of STAT protein"/>
    <property type="evidence" value="ECO:0000314"/>
    <property type="project" value="CACAO"/>
</dbReference>
<dbReference type="FunFam" id="1.20.1250.70:FF:000002">
    <property type="entry name" value="Interleukin"/>
    <property type="match status" value="1"/>
</dbReference>
<dbReference type="Gene3D" id="1.20.1250.70">
    <property type="entry name" value="Interleukin-15/Interleukin-21"/>
    <property type="match status" value="1"/>
</dbReference>
<dbReference type="InterPro" id="IPR009079">
    <property type="entry name" value="4_helix_cytokine-like_core"/>
</dbReference>
<dbReference type="InterPro" id="IPR003443">
    <property type="entry name" value="IL-15/IL-21_fam"/>
</dbReference>
<dbReference type="PANTHER" id="PTHR14356">
    <property type="entry name" value="INTERLEUKIN-15-RELATED"/>
    <property type="match status" value="1"/>
</dbReference>
<dbReference type="PANTHER" id="PTHR14356:SF2">
    <property type="entry name" value="INTERLEUKIN-21"/>
    <property type="match status" value="1"/>
</dbReference>
<dbReference type="Pfam" id="PF02372">
    <property type="entry name" value="IL15"/>
    <property type="match status" value="1"/>
</dbReference>
<dbReference type="SUPFAM" id="SSF47266">
    <property type="entry name" value="4-helical cytokines"/>
    <property type="match status" value="1"/>
</dbReference>
<feature type="signal peptide" evidence="1">
    <location>
        <begin position="1"/>
        <end position="24"/>
    </location>
</feature>
<feature type="chain" id="PRO_0000015505" description="Interleukin-21">
    <location>
        <begin position="25"/>
        <end position="162"/>
    </location>
</feature>
<feature type="region of interest" description="Disordered" evidence="4">
    <location>
        <begin position="105"/>
        <end position="126"/>
    </location>
</feature>
<feature type="glycosylation site" description="N-linked (GlcNAc...) asparagine" evidence="3">
    <location>
        <position position="97"/>
    </location>
</feature>
<feature type="disulfide bond" evidence="7 8 13 14">
    <location>
        <begin position="71"/>
        <end position="122"/>
    </location>
</feature>
<feature type="disulfide bond" evidence="7 8 13 14">
    <location>
        <begin position="78"/>
        <end position="125"/>
    </location>
</feature>
<feature type="splice variant" id="VSP_030129" description="In isoform 2." evidence="10">
    <original>MIHQHLSSRTHGSEDS</original>
    <variation>VSTLSFI</variation>
    <location>
        <begin position="147"/>
        <end position="162"/>
    </location>
</feature>
<feature type="sequence variant" id="VAR_071292" description="In CVID11; interferes with binding to IL21R." evidence="9">
    <original>L</original>
    <variation>P</variation>
    <location>
        <position position="56"/>
    </location>
</feature>
<feature type="helix" evidence="16">
    <location>
        <begin position="32"/>
        <end position="49"/>
    </location>
</feature>
<feature type="helix" evidence="16">
    <location>
        <begin position="50"/>
        <end position="55"/>
    </location>
</feature>
<feature type="helix" evidence="16">
    <location>
        <begin position="69"/>
        <end position="71"/>
    </location>
</feature>
<feature type="helix" evidence="16">
    <location>
        <begin position="72"/>
        <end position="81"/>
    </location>
</feature>
<feature type="helix" evidence="16">
    <location>
        <begin position="92"/>
        <end position="103"/>
    </location>
</feature>
<feature type="strand" evidence="15">
    <location>
        <begin position="108"/>
        <end position="112"/>
    </location>
</feature>
<feature type="helix" evidence="17">
    <location>
        <begin position="113"/>
        <end position="115"/>
    </location>
</feature>
<feature type="strand" evidence="16">
    <location>
        <begin position="120"/>
        <end position="122"/>
    </location>
</feature>
<feature type="turn" evidence="16">
    <location>
        <begin position="125"/>
        <end position="127"/>
    </location>
</feature>
<feature type="helix" evidence="16">
    <location>
        <begin position="133"/>
        <end position="149"/>
    </location>
</feature>
<proteinExistence type="evidence at protein level"/>